<organism>
    <name type="scientific">Mus musculus</name>
    <name type="common">Mouse</name>
    <dbReference type="NCBI Taxonomy" id="10090"/>
    <lineage>
        <taxon>Eukaryota</taxon>
        <taxon>Metazoa</taxon>
        <taxon>Chordata</taxon>
        <taxon>Craniata</taxon>
        <taxon>Vertebrata</taxon>
        <taxon>Euteleostomi</taxon>
        <taxon>Mammalia</taxon>
        <taxon>Eutheria</taxon>
        <taxon>Euarchontoglires</taxon>
        <taxon>Glires</taxon>
        <taxon>Rodentia</taxon>
        <taxon>Myomorpha</taxon>
        <taxon>Muroidea</taxon>
        <taxon>Muridae</taxon>
        <taxon>Murinae</taxon>
        <taxon>Mus</taxon>
        <taxon>Mus</taxon>
    </lineage>
</organism>
<evidence type="ECO:0000255" key="1"/>
<evidence type="ECO:0000255" key="2">
    <source>
        <dbReference type="PROSITE-ProRule" id="PRU00521"/>
    </source>
</evidence>
<evidence type="ECO:0000269" key="3">
    <source>
    </source>
</evidence>
<evidence type="ECO:0000269" key="4">
    <source>
    </source>
</evidence>
<evidence type="ECO:0000269" key="5">
    <source>
    </source>
</evidence>
<evidence type="ECO:0000303" key="6">
    <source>
    </source>
</evidence>
<evidence type="ECO:0000305" key="7"/>
<evidence type="ECO:0000312" key="8">
    <source>
        <dbReference type="MGI" id="MGI:3031274"/>
    </source>
</evidence>
<feature type="chain" id="PRO_0000430080" description="Olfactory receptor 5AN6">
    <location>
        <begin position="1"/>
        <end position="315"/>
    </location>
</feature>
<feature type="topological domain" description="Extracellular" evidence="1">
    <location>
        <begin position="1"/>
        <end position="29"/>
    </location>
</feature>
<feature type="transmembrane region" description="Helical; Name=1" evidence="1">
    <location>
        <begin position="30"/>
        <end position="50"/>
    </location>
</feature>
<feature type="topological domain" description="Cytoplasmic" evidence="1">
    <location>
        <begin position="51"/>
        <end position="54"/>
    </location>
</feature>
<feature type="transmembrane region" description="Helical; Name=2" evidence="1">
    <location>
        <begin position="55"/>
        <end position="75"/>
    </location>
</feature>
<feature type="topological domain" description="Extracellular" evidence="1">
    <location>
        <begin position="76"/>
        <end position="99"/>
    </location>
</feature>
<feature type="transmembrane region" description="Helical; Name=3" evidence="1">
    <location>
        <begin position="100"/>
        <end position="120"/>
    </location>
</feature>
<feature type="topological domain" description="Cytoplasmic" evidence="1">
    <location>
        <begin position="121"/>
        <end position="123"/>
    </location>
</feature>
<feature type="transmembrane region" description="Helical; Name=4" evidence="1">
    <location>
        <begin position="124"/>
        <end position="143"/>
    </location>
</feature>
<feature type="topological domain" description="Extracellular" evidence="1">
    <location>
        <position position="144"/>
    </location>
</feature>
<feature type="transmembrane region" description="Helical; Name=5" evidence="1">
    <location>
        <begin position="145"/>
        <end position="165"/>
    </location>
</feature>
<feature type="topological domain" description="Cytoplasmic" evidence="1">
    <location>
        <begin position="166"/>
        <end position="202"/>
    </location>
</feature>
<feature type="transmembrane region" description="Helical; Name=6" evidence="1">
    <location>
        <begin position="203"/>
        <end position="223"/>
    </location>
</feature>
<feature type="topological domain" description="Extracellular" evidence="1">
    <location>
        <begin position="224"/>
        <end position="240"/>
    </location>
</feature>
<feature type="transmembrane region" description="Helical; Name=7" evidence="1">
    <location>
        <begin position="241"/>
        <end position="261"/>
    </location>
</feature>
<feature type="topological domain" description="Cytoplasmic" evidence="1">
    <location>
        <begin position="262"/>
        <end position="272"/>
    </location>
</feature>
<feature type="transmembrane region" description="Helical; Name=8" evidence="1">
    <location>
        <begin position="273"/>
        <end position="293"/>
    </location>
</feature>
<feature type="topological domain" description="Extracellular" evidence="1">
    <location>
        <begin position="294"/>
        <end position="315"/>
    </location>
</feature>
<feature type="disulfide bond" evidence="2">
    <location>
        <begin position="98"/>
        <end position="180"/>
    </location>
</feature>
<reference key="1">
    <citation type="journal article" date="2002" name="Hum. Mol. Genet.">
        <title>Different evolutionary processes shaped the mouse and human olfactory receptor gene families.</title>
        <authorList>
            <person name="Young J.M."/>
            <person name="Friedman C."/>
            <person name="Williams E.M."/>
            <person name="Ross J.A."/>
            <person name="Tonnes-Priddy L."/>
            <person name="Trask B.J."/>
        </authorList>
    </citation>
    <scope>NUCLEOTIDE SEQUENCE [GENOMIC DNA]</scope>
</reference>
<reference key="2">
    <citation type="journal article" date="2002" name="Nat. Neurosci.">
        <title>The olfactory receptor gene superfamily of the mouse.</title>
        <authorList>
            <person name="Zhang X."/>
            <person name="Firestein S."/>
        </authorList>
    </citation>
    <scope>NUCLEOTIDE SEQUENCE [GENOMIC DNA]</scope>
</reference>
<reference key="3">
    <citation type="journal article" date="2003" name="Genome Biol.">
        <title>Odorant receptor expressed sequence tags demonstrate olfactory expression of over 400 genes, extensive alternate splicing and unequal expression levels.</title>
        <authorList>
            <person name="Young J.M."/>
            <person name="Shykind B.M."/>
            <person name="Lane R.P."/>
            <person name="Tonnes-Priddy L."/>
            <person name="Ross J.A."/>
            <person name="Walker M."/>
            <person name="Williams E.M."/>
            <person name="Trask B.J."/>
        </authorList>
    </citation>
    <scope>NUCLEOTIDE SEQUENCE [GENOMIC DNA]</scope>
</reference>
<reference key="4">
    <citation type="journal article" date="2009" name="PLoS Biol.">
        <title>Lineage-specific biology revealed by a finished genome assembly of the mouse.</title>
        <authorList>
            <person name="Church D.M."/>
            <person name="Goodstadt L."/>
            <person name="Hillier L.W."/>
            <person name="Zody M.C."/>
            <person name="Goldstein S."/>
            <person name="She X."/>
            <person name="Bult C.J."/>
            <person name="Agarwala R."/>
            <person name="Cherry J.L."/>
            <person name="DiCuccio M."/>
            <person name="Hlavina W."/>
            <person name="Kapustin Y."/>
            <person name="Meric P."/>
            <person name="Maglott D."/>
            <person name="Birtle Z."/>
            <person name="Marques A.C."/>
            <person name="Graves T."/>
            <person name="Zhou S."/>
            <person name="Teague B."/>
            <person name="Potamousis K."/>
            <person name="Churas C."/>
            <person name="Place M."/>
            <person name="Herschleb J."/>
            <person name="Runnheim R."/>
            <person name="Forrest D."/>
            <person name="Amos-Landgraf J."/>
            <person name="Schwartz D.C."/>
            <person name="Cheng Z."/>
            <person name="Lindblad-Toh K."/>
            <person name="Eichler E.E."/>
            <person name="Ponting C.P."/>
        </authorList>
    </citation>
    <scope>NUCLEOTIDE SEQUENCE [LARGE SCALE GENOMIC DNA]</scope>
    <source>
        <strain>C57BL/6J</strain>
    </source>
</reference>
<reference key="5">
    <citation type="journal article" date="2014" name="Neuron">
        <title>Olfactory receptor and neural pathway responsible for highly selective sensing of musk odors.</title>
        <authorList>
            <person name="Shirasu M."/>
            <person name="Yoshikawa K."/>
            <person name="Takai Y."/>
            <person name="Nakashima A."/>
            <person name="Takeuchi H."/>
            <person name="Sakano H."/>
            <person name="Touhara K."/>
        </authorList>
    </citation>
    <scope>FUNCTION</scope>
    <scope>TISSUE SPECIFICITY</scope>
</reference>
<reference key="6">
    <citation type="journal article" date="2016" name="J. Neurosci.">
        <title>Ligand specificity and evolution of mammalian musk odor receptors: effect of single receptor deletion on odor detection.</title>
        <authorList>
            <person name="Sato-Akuhara N."/>
            <person name="Horio N."/>
            <person name="Kato-Namba A."/>
            <person name="Yoshikawa K."/>
            <person name="Niimura Y."/>
            <person name="Ihara S."/>
            <person name="Shirasu M."/>
            <person name="Touhara K."/>
        </authorList>
    </citation>
    <scope>FUNCTION</scope>
    <scope>DISRUPTION PHENOTYPE</scope>
</reference>
<reference key="7">
    <citation type="journal article" date="2018" name="Nat. Commun.">
        <title>Single olfactory receptors set odor detection thresholds.</title>
        <authorList>
            <person name="Dewan A."/>
            <person name="Cichy A."/>
            <person name="Zhang J."/>
            <person name="Miguel K."/>
            <person name="Feinstein P."/>
            <person name="Rinberg D."/>
            <person name="Bozza T."/>
        </authorList>
    </citation>
    <scope>FUNCTION</scope>
    <scope>DISRUPTION PHENOTYPE</scope>
</reference>
<sequence>MPGGRNSTVITKFILVGFSDFPKLKLVLFVIFLGSYLSTVVWNLGLIILIRIDPYLHTPMYFFLSNLSFLDFCYISSTTPKMLSGFFQKSKSISFVGCTMQYFIFSSLGLSECCLLAAMAYDRYAAICNPLLYTAIMSPSLCVHMVVGAYSTGLLGSLIQLCAILQLHFCGPNIINHFFCDLPQLLVLSCSETFPLQVLKFVIAVIFGVASVIVILISYGYIIGTILNISSVEGRSKAFNTCASHLTAVTLFFGSGLFVYMRPSSNSSQGYDKMASVFYTVVIPMLNPLIYSLRNKEIKDALQRCKNKCFSQCHC</sequence>
<protein>
    <recommendedName>
        <fullName evidence="7">Olfactory receptor 5AN6</fullName>
    </recommendedName>
    <alternativeName>
        <fullName>Olfactory receptor 1440</fullName>
    </alternativeName>
    <alternativeName>
        <fullName>Olfactory receptor 202-4</fullName>
    </alternativeName>
</protein>
<proteinExistence type="evidence at transcript level"/>
<accession>Q8VFV4</accession>
<name>O5AN6_MOUSE</name>
<keyword id="KW-1003">Cell membrane</keyword>
<keyword id="KW-1015">Disulfide bond</keyword>
<keyword id="KW-0297">G-protein coupled receptor</keyword>
<keyword id="KW-0472">Membrane</keyword>
<keyword id="KW-0552">Olfaction</keyword>
<keyword id="KW-0675">Receptor</keyword>
<keyword id="KW-1185">Reference proteome</keyword>
<keyword id="KW-0716">Sensory transduction</keyword>
<keyword id="KW-0807">Transducer</keyword>
<keyword id="KW-0812">Transmembrane</keyword>
<keyword id="KW-1133">Transmembrane helix</keyword>
<comment type="function">
    <text evidence="3 4 5 7">Odorant receptor specific for muscone (PubMed:24361078, PubMed:27098692, PubMed:30038239). Muscone-binding causes a conformation change that triggers signaling via G(s)-class of G alpha protein GNAL, activating adenylyl cyclase (Probable).</text>
</comment>
<comment type="subcellular location">
    <subcellularLocation>
        <location evidence="7">Cell membrane</location>
        <topology evidence="1">Multi-pass membrane protein</topology>
    </subcellularLocation>
</comment>
<comment type="tissue specificity">
    <text evidence="3">Localized in the dorsomedial and ventral region of the olfactory bulb.</text>
</comment>
<comment type="disruption phenotype">
    <text evidence="4 5">Mice show stongly reduced sensitivity to muscone.</text>
</comment>
<comment type="similarity">
    <text evidence="2">Belongs to the G-protein coupled receptor 1 family.</text>
</comment>
<dbReference type="EMBL" id="AY073411">
    <property type="protein sequence ID" value="AAL61074.1"/>
    <property type="molecule type" value="Genomic_DNA"/>
</dbReference>
<dbReference type="EMBL" id="AY318659">
    <property type="protein sequence ID" value="AAP71810.1"/>
    <property type="molecule type" value="Genomic_DNA"/>
</dbReference>
<dbReference type="EMBL" id="AC129773">
    <property type="status" value="NOT_ANNOTATED_CDS"/>
    <property type="molecule type" value="Genomic_DNA"/>
</dbReference>
<dbReference type="CCDS" id="CCDS29629.1"/>
<dbReference type="RefSeq" id="NP_666895.1">
    <property type="nucleotide sequence ID" value="NM_146684.1"/>
</dbReference>
<dbReference type="RefSeq" id="XP_006527169.1">
    <property type="nucleotide sequence ID" value="XM_006527106.1"/>
</dbReference>
<dbReference type="SMR" id="Q8VFV4"/>
<dbReference type="FunCoup" id="Q8VFV4">
    <property type="interactions" value="1210"/>
</dbReference>
<dbReference type="STRING" id="10090.ENSMUSP00000150691"/>
<dbReference type="PaxDb" id="10090-ENSMUSP00000054798"/>
<dbReference type="DNASU" id="258679"/>
<dbReference type="Ensembl" id="ENSMUST00000054567.2">
    <property type="protein sequence ID" value="ENSMUSP00000054798.2"/>
    <property type="gene ID" value="ENSMUSG00000046650.5"/>
</dbReference>
<dbReference type="Ensembl" id="ENSMUST00000213657.2">
    <property type="protein sequence ID" value="ENSMUSP00000150691.2"/>
    <property type="gene ID" value="ENSMUSG00000046650.5"/>
</dbReference>
<dbReference type="Ensembl" id="ENSMUST00000213894.2">
    <property type="protein sequence ID" value="ENSMUSP00000150365.2"/>
    <property type="gene ID" value="ENSMUSG00000046650.5"/>
</dbReference>
<dbReference type="Ensembl" id="ENSMUST00000216145.2">
    <property type="protein sequence ID" value="ENSMUSP00000150994.2"/>
    <property type="gene ID" value="ENSMUSG00000046650.5"/>
</dbReference>
<dbReference type="Ensembl" id="ENSMUST00000217062.3">
    <property type="protein sequence ID" value="ENSMUSP00000148978.2"/>
    <property type="gene ID" value="ENSMUSG00000046650.5"/>
</dbReference>
<dbReference type="GeneID" id="258679"/>
<dbReference type="KEGG" id="mmu:258679"/>
<dbReference type="UCSC" id="uc008gty.1">
    <property type="organism name" value="mouse"/>
</dbReference>
<dbReference type="AGR" id="MGI:3031274"/>
<dbReference type="CTD" id="258679"/>
<dbReference type="MGI" id="MGI:3031274">
    <property type="gene designation" value="Or5an6"/>
</dbReference>
<dbReference type="VEuPathDB" id="HostDB:ENSMUSG00000046650"/>
<dbReference type="eggNOG" id="ENOG502SJZ4">
    <property type="taxonomic scope" value="Eukaryota"/>
</dbReference>
<dbReference type="GeneTree" id="ENSGT01130000278279"/>
<dbReference type="HOGENOM" id="CLU_012526_1_0_1"/>
<dbReference type="InParanoid" id="Q8VFV4"/>
<dbReference type="OMA" id="GLFVYMH"/>
<dbReference type="OrthoDB" id="9441609at2759"/>
<dbReference type="PhylomeDB" id="Q8VFV4"/>
<dbReference type="TreeFam" id="TF352753"/>
<dbReference type="BioGRID-ORCS" id="258679">
    <property type="hits" value="3 hits in 70 CRISPR screens"/>
</dbReference>
<dbReference type="PRO" id="PR:Q8VFV4"/>
<dbReference type="Proteomes" id="UP000000589">
    <property type="component" value="Chromosome 19"/>
</dbReference>
<dbReference type="RNAct" id="Q8VFV4">
    <property type="molecule type" value="protein"/>
</dbReference>
<dbReference type="Bgee" id="ENSMUSG00000046650">
    <property type="expression patterns" value="Expressed in respiratory tract epithelium and 4 other cell types or tissues"/>
</dbReference>
<dbReference type="GO" id="GO:0016020">
    <property type="term" value="C:membrane"/>
    <property type="evidence" value="ECO:0000247"/>
    <property type="project" value="MGI"/>
</dbReference>
<dbReference type="GO" id="GO:0005886">
    <property type="term" value="C:plasma membrane"/>
    <property type="evidence" value="ECO:0007669"/>
    <property type="project" value="UniProtKB-SubCell"/>
</dbReference>
<dbReference type="GO" id="GO:0004930">
    <property type="term" value="F:G protein-coupled receptor activity"/>
    <property type="evidence" value="ECO:0007669"/>
    <property type="project" value="UniProtKB-KW"/>
</dbReference>
<dbReference type="GO" id="GO:0004984">
    <property type="term" value="F:olfactory receptor activity"/>
    <property type="evidence" value="ECO:0000314"/>
    <property type="project" value="MGI"/>
</dbReference>
<dbReference type="GO" id="GO:0007186">
    <property type="term" value="P:G protein-coupled receptor signaling pathway"/>
    <property type="evidence" value="ECO:0000247"/>
    <property type="project" value="MGI"/>
</dbReference>
<dbReference type="GO" id="GO:0007608">
    <property type="term" value="P:sensory perception of smell"/>
    <property type="evidence" value="ECO:0000315"/>
    <property type="project" value="UniProtKB"/>
</dbReference>
<dbReference type="CDD" id="cd15417">
    <property type="entry name" value="7tmA_OR5A1-like"/>
    <property type="match status" value="1"/>
</dbReference>
<dbReference type="FunFam" id="1.20.1070.10:FF:000003">
    <property type="entry name" value="Olfactory receptor"/>
    <property type="match status" value="1"/>
</dbReference>
<dbReference type="Gene3D" id="1.20.1070.10">
    <property type="entry name" value="Rhodopsin 7-helix transmembrane proteins"/>
    <property type="match status" value="1"/>
</dbReference>
<dbReference type="InterPro" id="IPR000276">
    <property type="entry name" value="GPCR_Rhodpsn"/>
</dbReference>
<dbReference type="InterPro" id="IPR017452">
    <property type="entry name" value="GPCR_Rhodpsn_7TM"/>
</dbReference>
<dbReference type="InterPro" id="IPR000725">
    <property type="entry name" value="Olfact_rcpt"/>
</dbReference>
<dbReference type="PANTHER" id="PTHR48018">
    <property type="entry name" value="OLFACTORY RECEPTOR"/>
    <property type="match status" value="1"/>
</dbReference>
<dbReference type="Pfam" id="PF13853">
    <property type="entry name" value="7tm_4"/>
    <property type="match status" value="1"/>
</dbReference>
<dbReference type="PRINTS" id="PR00237">
    <property type="entry name" value="GPCRRHODOPSN"/>
</dbReference>
<dbReference type="PRINTS" id="PR00245">
    <property type="entry name" value="OLFACTORYR"/>
</dbReference>
<dbReference type="SUPFAM" id="SSF81321">
    <property type="entry name" value="Family A G protein-coupled receptor-like"/>
    <property type="match status" value="1"/>
</dbReference>
<dbReference type="PROSITE" id="PS00237">
    <property type="entry name" value="G_PROTEIN_RECEP_F1_1"/>
    <property type="match status" value="1"/>
</dbReference>
<dbReference type="PROSITE" id="PS50262">
    <property type="entry name" value="G_PROTEIN_RECEP_F1_2"/>
    <property type="match status" value="1"/>
</dbReference>
<gene>
    <name evidence="8" type="primary">Or5an6</name>
    <name evidence="8" type="synonym">Mor215-1</name>
    <name evidence="6 8" type="synonym">Olfr1440</name>
</gene>